<accession>Q9ZD10</accession>
<sequence>MRIAKILLPVSKLFPLDYLITEDLELNIGDLVVVHFRNKELTGIVWELDTNSEAKKIKTIEAKAPLNLSITLEVLELIKWMSSYYMSELGSIAKLVLPINISEKPIKIKEQQVKNHFVLPKLSEEQKQAVTILNESNKPTLIKGVTGSGKTEIYFHIIADYLIKGRQVLIMLPEIALGKQIINRFIDRFGFEPIIWNSSVTKAQKKMILRGILSNKVKVVIGTRSSLFLPFHNLGLIVIDEEHDDSYKQDDNILYNARDTAIVRGKFDKAKIVLCSATPSLETIYNIKTHKYQLVTLANRYKNVDLPNIEIIDMTKEKLPKNSYLSKILIDAIKGNLENKKQALLFLNRRGYAPLMLCKACGHRFTCKFCSAWMVLHKATKKLECHHCGYQSKIFSSCPECLEDETLTICGPGIERIAEEAMLLFPKSKIAVISKDHAKTPEKIAQLLHQMENLEIDILIGTQIITKGYHFPNLTLVGVIDADLGSNNAELRASERTFQLLHQVGGRAGRGDSKGVVYLQSYYPDNIIFSYVKVGDEDRFFTNELEIRKAANMPPFSKTASLILSGFSESKILDIARKIVQIAPKANVKILGPARSLMSKLAGKYRYRILIIADKKFNLQKYLKFWLGFIKIPSYCQIKIDIDPKTFY</sequence>
<reference key="1">
    <citation type="journal article" date="1998" name="Nature">
        <title>The genome sequence of Rickettsia prowazekii and the origin of mitochondria.</title>
        <authorList>
            <person name="Andersson S.G.E."/>
            <person name="Zomorodipour A."/>
            <person name="Andersson J.O."/>
            <person name="Sicheritz-Ponten T."/>
            <person name="Alsmark U.C.M."/>
            <person name="Podowski R.M."/>
            <person name="Naeslund A.K."/>
            <person name="Eriksson A.-S."/>
            <person name="Winkler H.H."/>
            <person name="Kurland C.G."/>
        </authorList>
    </citation>
    <scope>NUCLEOTIDE SEQUENCE [LARGE SCALE GENOMIC DNA]</scope>
    <source>
        <strain>Madrid E</strain>
    </source>
</reference>
<proteinExistence type="inferred from homology"/>
<evidence type="ECO:0000255" key="1">
    <source>
        <dbReference type="HAMAP-Rule" id="MF_00983"/>
    </source>
</evidence>
<feature type="chain" id="PRO_0000102132" description="Replication restart protein PriA">
    <location>
        <begin position="1"/>
        <end position="648"/>
    </location>
</feature>
<feature type="domain" description="Helicase ATP-binding" evidence="1">
    <location>
        <begin position="131"/>
        <end position="297"/>
    </location>
</feature>
<feature type="domain" description="Helicase C-terminal" evidence="1">
    <location>
        <begin position="375"/>
        <end position="548"/>
    </location>
</feature>
<feature type="short sequence motif" description="DEAH box" evidence="1">
    <location>
        <begin position="240"/>
        <end position="243"/>
    </location>
</feature>
<feature type="binding site" evidence="1">
    <location>
        <begin position="144"/>
        <end position="151"/>
    </location>
    <ligand>
        <name>ATP</name>
        <dbReference type="ChEBI" id="CHEBI:30616"/>
    </ligand>
</feature>
<feature type="binding site" evidence="1">
    <location>
        <position position="358"/>
    </location>
    <ligand>
        <name>Zn(2+)</name>
        <dbReference type="ChEBI" id="CHEBI:29105"/>
        <label>1</label>
    </ligand>
</feature>
<feature type="binding site" evidence="1">
    <location>
        <position position="361"/>
    </location>
    <ligand>
        <name>Zn(2+)</name>
        <dbReference type="ChEBI" id="CHEBI:29105"/>
        <label>1</label>
    </ligand>
</feature>
<feature type="binding site" evidence="1">
    <location>
        <position position="367"/>
    </location>
    <ligand>
        <name>Zn(2+)</name>
        <dbReference type="ChEBI" id="CHEBI:29105"/>
        <label>2</label>
    </ligand>
</feature>
<feature type="binding site" evidence="1">
    <location>
        <position position="370"/>
    </location>
    <ligand>
        <name>Zn(2+)</name>
        <dbReference type="ChEBI" id="CHEBI:29105"/>
        <label>2</label>
    </ligand>
</feature>
<feature type="binding site" evidence="1">
    <location>
        <position position="385"/>
    </location>
    <ligand>
        <name>Zn(2+)</name>
        <dbReference type="ChEBI" id="CHEBI:29105"/>
        <label>2</label>
    </ligand>
</feature>
<feature type="binding site" evidence="1">
    <location>
        <position position="388"/>
    </location>
    <ligand>
        <name>Zn(2+)</name>
        <dbReference type="ChEBI" id="CHEBI:29105"/>
        <label>2</label>
    </ligand>
</feature>
<feature type="binding site" evidence="1">
    <location>
        <position position="398"/>
    </location>
    <ligand>
        <name>Zn(2+)</name>
        <dbReference type="ChEBI" id="CHEBI:29105"/>
        <label>1</label>
    </ligand>
</feature>
<feature type="binding site" evidence="1">
    <location>
        <position position="401"/>
    </location>
    <ligand>
        <name>Zn(2+)</name>
        <dbReference type="ChEBI" id="CHEBI:29105"/>
        <label>1</label>
    </ligand>
</feature>
<name>PRIA_RICPR</name>
<protein>
    <recommendedName>
        <fullName evidence="1">Replication restart protein PriA</fullName>
    </recommendedName>
    <alternativeName>
        <fullName evidence="1">ATP-dependent DNA helicase PriA</fullName>
        <ecNumber evidence="1">5.6.2.4</ecNumber>
    </alternativeName>
    <alternativeName>
        <fullName evidence="1">DNA 3'-5' helicase PriA</fullName>
    </alternativeName>
</protein>
<comment type="function">
    <text evidence="1">Initiates the restart of stalled replication forks, which reloads the replicative helicase on sites other than the origin of replication. Recognizes and binds to abandoned replication forks and remodels them to uncover a helicase loading site. Promotes assembly of the primosome at these replication forks.</text>
</comment>
<comment type="catalytic activity">
    <reaction evidence="1">
        <text>Couples ATP hydrolysis with the unwinding of duplex DNA by translocating in the 3'-5' direction.</text>
        <dbReference type="EC" id="5.6.2.4"/>
    </reaction>
</comment>
<comment type="catalytic activity">
    <reaction evidence="1">
        <text>ATP + H2O = ADP + phosphate + H(+)</text>
        <dbReference type="Rhea" id="RHEA:13065"/>
        <dbReference type="ChEBI" id="CHEBI:15377"/>
        <dbReference type="ChEBI" id="CHEBI:15378"/>
        <dbReference type="ChEBI" id="CHEBI:30616"/>
        <dbReference type="ChEBI" id="CHEBI:43474"/>
        <dbReference type="ChEBI" id="CHEBI:456216"/>
        <dbReference type="EC" id="5.6.2.4"/>
    </reaction>
</comment>
<comment type="cofactor">
    <cofactor evidence="1">
        <name>Zn(2+)</name>
        <dbReference type="ChEBI" id="CHEBI:29105"/>
    </cofactor>
    <text evidence="1">Binds 2 zinc ions per subunit.</text>
</comment>
<comment type="subunit">
    <text evidence="1">Component of the replication restart primosome.</text>
</comment>
<comment type="similarity">
    <text evidence="1">Belongs to the helicase family. PriA subfamily.</text>
</comment>
<organism>
    <name type="scientific">Rickettsia prowazekii (strain Madrid E)</name>
    <dbReference type="NCBI Taxonomy" id="272947"/>
    <lineage>
        <taxon>Bacteria</taxon>
        <taxon>Pseudomonadati</taxon>
        <taxon>Pseudomonadota</taxon>
        <taxon>Alphaproteobacteria</taxon>
        <taxon>Rickettsiales</taxon>
        <taxon>Rickettsiaceae</taxon>
        <taxon>Rickettsieae</taxon>
        <taxon>Rickettsia</taxon>
        <taxon>typhus group</taxon>
    </lineage>
</organism>
<keyword id="KW-0067">ATP-binding</keyword>
<keyword id="KW-0235">DNA replication</keyword>
<keyword id="KW-0238">DNA-binding</keyword>
<keyword id="KW-0347">Helicase</keyword>
<keyword id="KW-0378">Hydrolase</keyword>
<keyword id="KW-0413">Isomerase</keyword>
<keyword id="KW-0479">Metal-binding</keyword>
<keyword id="KW-0547">Nucleotide-binding</keyword>
<keyword id="KW-0639">Primosome</keyword>
<keyword id="KW-1185">Reference proteome</keyword>
<keyword id="KW-0862">Zinc</keyword>
<dbReference type="EC" id="5.6.2.4" evidence="1"/>
<dbReference type="EMBL" id="AJ235272">
    <property type="protein sequence ID" value="CAA14989.1"/>
    <property type="molecule type" value="Genomic_DNA"/>
</dbReference>
<dbReference type="PIR" id="C71658">
    <property type="entry name" value="C71658"/>
</dbReference>
<dbReference type="RefSeq" id="NP_220913.1">
    <property type="nucleotide sequence ID" value="NC_000963.1"/>
</dbReference>
<dbReference type="RefSeq" id="WP_004597830.1">
    <property type="nucleotide sequence ID" value="NC_000963.1"/>
</dbReference>
<dbReference type="SMR" id="Q9ZD10"/>
<dbReference type="STRING" id="272947.gene:17555620"/>
<dbReference type="EnsemblBacteria" id="CAA14989">
    <property type="protein sequence ID" value="CAA14989"/>
    <property type="gene ID" value="CAA14989"/>
</dbReference>
<dbReference type="KEGG" id="rpr:RP540"/>
<dbReference type="PATRIC" id="fig|272947.5.peg.551"/>
<dbReference type="eggNOG" id="COG1198">
    <property type="taxonomic scope" value="Bacteria"/>
</dbReference>
<dbReference type="HOGENOM" id="CLU_013353_4_1_5"/>
<dbReference type="OrthoDB" id="9759544at2"/>
<dbReference type="Proteomes" id="UP000002480">
    <property type="component" value="Chromosome"/>
</dbReference>
<dbReference type="GO" id="GO:1990077">
    <property type="term" value="C:primosome complex"/>
    <property type="evidence" value="ECO:0007669"/>
    <property type="project" value="UniProtKB-UniRule"/>
</dbReference>
<dbReference type="GO" id="GO:0043138">
    <property type="term" value="F:3'-5' DNA helicase activity"/>
    <property type="evidence" value="ECO:0007669"/>
    <property type="project" value="TreeGrafter"/>
</dbReference>
<dbReference type="GO" id="GO:0005524">
    <property type="term" value="F:ATP binding"/>
    <property type="evidence" value="ECO:0007669"/>
    <property type="project" value="UniProtKB-UniRule"/>
</dbReference>
<dbReference type="GO" id="GO:0016887">
    <property type="term" value="F:ATP hydrolysis activity"/>
    <property type="evidence" value="ECO:0007669"/>
    <property type="project" value="RHEA"/>
</dbReference>
<dbReference type="GO" id="GO:0003677">
    <property type="term" value="F:DNA binding"/>
    <property type="evidence" value="ECO:0007669"/>
    <property type="project" value="UniProtKB-UniRule"/>
</dbReference>
<dbReference type="GO" id="GO:0008270">
    <property type="term" value="F:zinc ion binding"/>
    <property type="evidence" value="ECO:0007669"/>
    <property type="project" value="UniProtKB-UniRule"/>
</dbReference>
<dbReference type="GO" id="GO:0006310">
    <property type="term" value="P:DNA recombination"/>
    <property type="evidence" value="ECO:0007669"/>
    <property type="project" value="InterPro"/>
</dbReference>
<dbReference type="GO" id="GO:0006270">
    <property type="term" value="P:DNA replication initiation"/>
    <property type="evidence" value="ECO:0007669"/>
    <property type="project" value="TreeGrafter"/>
</dbReference>
<dbReference type="GO" id="GO:0006269">
    <property type="term" value="P:DNA replication, synthesis of primer"/>
    <property type="evidence" value="ECO:0007669"/>
    <property type="project" value="UniProtKB-KW"/>
</dbReference>
<dbReference type="GO" id="GO:0006302">
    <property type="term" value="P:double-strand break repair"/>
    <property type="evidence" value="ECO:0007669"/>
    <property type="project" value="InterPro"/>
</dbReference>
<dbReference type="CDD" id="cd17929">
    <property type="entry name" value="DEXHc_priA"/>
    <property type="match status" value="1"/>
</dbReference>
<dbReference type="CDD" id="cd18804">
    <property type="entry name" value="SF2_C_priA"/>
    <property type="match status" value="1"/>
</dbReference>
<dbReference type="FunFam" id="3.40.50.300:FF:000489">
    <property type="entry name" value="Primosome assembly protein PriA"/>
    <property type="match status" value="1"/>
</dbReference>
<dbReference type="Gene3D" id="3.40.50.300">
    <property type="entry name" value="P-loop containing nucleotide triphosphate hydrolases"/>
    <property type="match status" value="2"/>
</dbReference>
<dbReference type="Gene3D" id="3.40.1440.60">
    <property type="entry name" value="PriA, 3(prime) DNA-binding domain"/>
    <property type="match status" value="1"/>
</dbReference>
<dbReference type="HAMAP" id="MF_00983">
    <property type="entry name" value="PriA"/>
    <property type="match status" value="1"/>
</dbReference>
<dbReference type="InterPro" id="IPR011545">
    <property type="entry name" value="DEAD/DEAH_box_helicase_dom"/>
</dbReference>
<dbReference type="InterPro" id="IPR014001">
    <property type="entry name" value="Helicase_ATP-bd"/>
</dbReference>
<dbReference type="InterPro" id="IPR001650">
    <property type="entry name" value="Helicase_C-like"/>
</dbReference>
<dbReference type="InterPro" id="IPR027417">
    <property type="entry name" value="P-loop_NTPase"/>
</dbReference>
<dbReference type="InterPro" id="IPR005259">
    <property type="entry name" value="PriA"/>
</dbReference>
<dbReference type="InterPro" id="IPR041222">
    <property type="entry name" value="PriA_3primeBD"/>
</dbReference>
<dbReference type="InterPro" id="IPR042115">
    <property type="entry name" value="PriA_3primeBD_sf"/>
</dbReference>
<dbReference type="InterPro" id="IPR041236">
    <property type="entry name" value="PriA_C"/>
</dbReference>
<dbReference type="InterPro" id="IPR040498">
    <property type="entry name" value="PriA_CRR"/>
</dbReference>
<dbReference type="InterPro" id="IPR050880">
    <property type="entry name" value="PriA_helicase"/>
</dbReference>
<dbReference type="NCBIfam" id="TIGR00595">
    <property type="entry name" value="priA"/>
    <property type="match status" value="1"/>
</dbReference>
<dbReference type="NCBIfam" id="NF004072">
    <property type="entry name" value="PRK05580.2-4"/>
    <property type="match status" value="1"/>
</dbReference>
<dbReference type="PANTHER" id="PTHR30580">
    <property type="entry name" value="PRIMOSOMAL PROTEIN N"/>
    <property type="match status" value="1"/>
</dbReference>
<dbReference type="PANTHER" id="PTHR30580:SF0">
    <property type="entry name" value="PRIMOSOMAL PROTEIN N"/>
    <property type="match status" value="1"/>
</dbReference>
<dbReference type="Pfam" id="PF00270">
    <property type="entry name" value="DEAD"/>
    <property type="match status" value="1"/>
</dbReference>
<dbReference type="Pfam" id="PF00271">
    <property type="entry name" value="Helicase_C"/>
    <property type="match status" value="1"/>
</dbReference>
<dbReference type="Pfam" id="PF17764">
    <property type="entry name" value="PriA_3primeBD"/>
    <property type="match status" value="1"/>
</dbReference>
<dbReference type="Pfam" id="PF18074">
    <property type="entry name" value="PriA_C"/>
    <property type="match status" value="1"/>
</dbReference>
<dbReference type="Pfam" id="PF18319">
    <property type="entry name" value="Zn_ribbon_PriA"/>
    <property type="match status" value="1"/>
</dbReference>
<dbReference type="SMART" id="SM00487">
    <property type="entry name" value="DEXDc"/>
    <property type="match status" value="1"/>
</dbReference>
<dbReference type="SMART" id="SM00490">
    <property type="entry name" value="HELICc"/>
    <property type="match status" value="1"/>
</dbReference>
<dbReference type="SUPFAM" id="SSF52540">
    <property type="entry name" value="P-loop containing nucleoside triphosphate hydrolases"/>
    <property type="match status" value="2"/>
</dbReference>
<dbReference type="PROSITE" id="PS51192">
    <property type="entry name" value="HELICASE_ATP_BIND_1"/>
    <property type="match status" value="1"/>
</dbReference>
<dbReference type="PROSITE" id="PS51194">
    <property type="entry name" value="HELICASE_CTER"/>
    <property type="match status" value="1"/>
</dbReference>
<gene>
    <name evidence="1" type="primary">priA</name>
    <name type="ordered locus">RP540</name>
</gene>